<geneLocation type="mitochondrion"/>
<gene>
    <name type="ordered locus">AtMg01210</name>
</gene>
<comment type="subcellular location">
    <subcellularLocation>
        <location evidence="1">Mitochondrion</location>
    </subcellularLocation>
</comment>
<comment type="miscellaneous">
    <text>A stretch of 270 kb of the mitochondrial genome is duplicated within the centromere of chromosome 2 resulting in the duplication of the gene. The expression of the duplicated gene is not demonstrated.</text>
</comment>
<proteinExistence type="predicted"/>
<feature type="chain" id="PRO_0000196817" description="Uncharacterized mitochondrial protein AtMg01210">
    <location>
        <begin position="1"/>
        <end position="101"/>
    </location>
</feature>
<organism>
    <name type="scientific">Arabidopsis thaliana</name>
    <name type="common">Mouse-ear cress</name>
    <dbReference type="NCBI Taxonomy" id="3702"/>
    <lineage>
        <taxon>Eukaryota</taxon>
        <taxon>Viridiplantae</taxon>
        <taxon>Streptophyta</taxon>
        <taxon>Embryophyta</taxon>
        <taxon>Tracheophyta</taxon>
        <taxon>Spermatophyta</taxon>
        <taxon>Magnoliopsida</taxon>
        <taxon>eudicotyledons</taxon>
        <taxon>Gunneridae</taxon>
        <taxon>Pentapetalae</taxon>
        <taxon>rosids</taxon>
        <taxon>malvids</taxon>
        <taxon>Brassicales</taxon>
        <taxon>Brassicaceae</taxon>
        <taxon>Camelineae</taxon>
        <taxon>Arabidopsis</taxon>
    </lineage>
</organism>
<evidence type="ECO:0000305" key="1"/>
<keyword id="KW-0496">Mitochondrion</keyword>
<keyword id="KW-1185">Reference proteome</keyword>
<accession>P92551</accession>
<accession>Q1ZXW6</accession>
<name>M1210_ARATH</name>
<protein>
    <recommendedName>
        <fullName>Uncharacterized mitochondrial protein AtMg01210</fullName>
    </recommendedName>
    <alternativeName>
        <fullName>ORF101b</fullName>
    </alternativeName>
</protein>
<sequence length="101" mass="11473">MIHQINSINMEIILTDVARDALQEKIVSQLSILLRVYRDTNTSESVTLPLSGVNLQEVAARSFFNNESIPWFFHLFRPCQSGHEKKPLCPQALELVLSFSS</sequence>
<dbReference type="EMBL" id="Y08501">
    <property type="protein sequence ID" value="CAA69804.1"/>
    <property type="molecule type" value="Genomic_DNA"/>
</dbReference>
<dbReference type="EMBL" id="BK010421">
    <property type="status" value="NOT_ANNOTATED_CDS"/>
    <property type="molecule type" value="Genomic_DNA"/>
</dbReference>
<dbReference type="EMBL" id="AC007730">
    <property type="status" value="NOT_ANNOTATED_CDS"/>
    <property type="molecule type" value="Genomic_DNA"/>
</dbReference>
<dbReference type="RefSeq" id="NP_085573.1">
    <property type="nucleotide sequence ID" value="NC_001284.2"/>
</dbReference>
<dbReference type="SMR" id="P92551"/>
<dbReference type="STRING" id="3702.P92551"/>
<dbReference type="PaxDb" id="3702-ATMG01210.1"/>
<dbReference type="EnsemblPlants" id="ATMG01210.1">
    <property type="protein sequence ID" value="ATMG01210.1"/>
    <property type="gene ID" value="ATMG01210"/>
</dbReference>
<dbReference type="Gramene" id="ATMG01210.1">
    <property type="protein sequence ID" value="ATMG01210.1"/>
    <property type="gene ID" value="ATMG01210"/>
</dbReference>
<dbReference type="Araport" id="ATMG01210"/>
<dbReference type="TAIR" id="ATMG01210">
    <property type="gene designation" value="ORF101B"/>
</dbReference>
<dbReference type="HOGENOM" id="CLU_2295565_0_0_1"/>
<dbReference type="InParanoid" id="P92551"/>
<dbReference type="PRO" id="PR:P92551"/>
<dbReference type="Proteomes" id="UP000006548">
    <property type="component" value="Mitochondrion MT"/>
</dbReference>
<dbReference type="GO" id="GO:0005739">
    <property type="term" value="C:mitochondrion"/>
    <property type="evidence" value="ECO:0007669"/>
    <property type="project" value="UniProtKB-SubCell"/>
</dbReference>
<reference key="1">
    <citation type="journal article" date="1997" name="Nat. Genet.">
        <title>The mitochondrial genome of Arabidopsis thaliana contains 57 genes in 366,924 nucleotides.</title>
        <authorList>
            <person name="Unseld M."/>
            <person name="Marienfeld J.R."/>
            <person name="Brandt P."/>
            <person name="Brennicke A."/>
        </authorList>
    </citation>
    <scope>NUCLEOTIDE SEQUENCE [LARGE SCALE GENOMIC DNA]</scope>
    <source>
        <strain>cv. C24</strain>
    </source>
</reference>
<reference key="2">
    <citation type="journal article" date="2018" name="Plant Cell">
        <title>Correction of persistent errors in Arabidopsis reference mitochondrial genomes.</title>
        <authorList>
            <person name="Sloan D.B."/>
            <person name="Wu Z."/>
            <person name="Sharbrough J."/>
        </authorList>
    </citation>
    <scope>NUCLEOTIDE SEQUENCE [LARGE SCALE GENOMIC DNA]</scope>
    <source>
        <strain>cv. Columbia</strain>
    </source>
</reference>
<reference key="3">
    <citation type="journal article" date="1999" name="Nature">
        <title>Sequence and analysis of chromosome 2 of the plant Arabidopsis thaliana.</title>
        <authorList>
            <person name="Lin X."/>
            <person name="Kaul S."/>
            <person name="Rounsley S.D."/>
            <person name="Shea T.P."/>
            <person name="Benito M.-I."/>
            <person name="Town C.D."/>
            <person name="Fujii C.Y."/>
            <person name="Mason T.M."/>
            <person name="Bowman C.L."/>
            <person name="Barnstead M.E."/>
            <person name="Feldblyum T.V."/>
            <person name="Buell C.R."/>
            <person name="Ketchum K.A."/>
            <person name="Lee J.J."/>
            <person name="Ronning C.M."/>
            <person name="Koo H.L."/>
            <person name="Moffat K.S."/>
            <person name="Cronin L.A."/>
            <person name="Shen M."/>
            <person name="Pai G."/>
            <person name="Van Aken S."/>
            <person name="Umayam L."/>
            <person name="Tallon L.J."/>
            <person name="Gill J.E."/>
            <person name="Adams M.D."/>
            <person name="Carrera A.J."/>
            <person name="Creasy T.H."/>
            <person name="Goodman H.M."/>
            <person name="Somerville C.R."/>
            <person name="Copenhaver G.P."/>
            <person name="Preuss D."/>
            <person name="Nierman W.C."/>
            <person name="White O."/>
            <person name="Eisen J.A."/>
            <person name="Salzberg S.L."/>
            <person name="Fraser C.M."/>
            <person name="Venter J.C."/>
        </authorList>
    </citation>
    <scope>NUCLEOTIDE SEQUENCE [LARGE SCALE GENOMIC DNA]</scope>
    <source>
        <strain>cv. Columbia</strain>
    </source>
</reference>